<reference key="1">
    <citation type="journal article" date="2009" name="Genome Biol.">
        <title>Genomic and genetic analyses of diversity and plant interactions of Pseudomonas fluorescens.</title>
        <authorList>
            <person name="Silby M.W."/>
            <person name="Cerdeno-Tarraga A.M."/>
            <person name="Vernikos G.S."/>
            <person name="Giddens S.R."/>
            <person name="Jackson R.W."/>
            <person name="Preston G.M."/>
            <person name="Zhang X.-X."/>
            <person name="Moon C.D."/>
            <person name="Gehrig S.M."/>
            <person name="Godfrey S.A.C."/>
            <person name="Knight C.G."/>
            <person name="Malone J.G."/>
            <person name="Robinson Z."/>
            <person name="Spiers A.J."/>
            <person name="Harris S."/>
            <person name="Challis G.L."/>
            <person name="Yaxley A.M."/>
            <person name="Harris D."/>
            <person name="Seeger K."/>
            <person name="Murphy L."/>
            <person name="Rutter S."/>
            <person name="Squares R."/>
            <person name="Quail M.A."/>
            <person name="Saunders E."/>
            <person name="Mavromatis K."/>
            <person name="Brettin T.S."/>
            <person name="Bentley S.D."/>
            <person name="Hothersall J."/>
            <person name="Stephens E."/>
            <person name="Thomas C.M."/>
            <person name="Parkhill J."/>
            <person name="Levy S.B."/>
            <person name="Rainey P.B."/>
            <person name="Thomson N.R."/>
        </authorList>
    </citation>
    <scope>NUCLEOTIDE SEQUENCE [LARGE SCALE GENOMIC DNA]</scope>
    <source>
        <strain>SBW25</strain>
    </source>
</reference>
<sequence length="298" mass="32534">MNALTLPDIAAQASRQALPLDWVGMCGIALPILIDGQRLTATADAGVSLDDGAARGIHMSRLYLALEMLDQQPLTPALLRNVLQRFLDSHEGLSNNAYLRIHTDLLLKRPALVSPLAGWKRYPVSIEARLENQMFHVELKIDVTYSSTCPCSAALARQLIQQQFLDDFGDTSLRHEDVLTWLGSANGIVATPHSQRSSAQLLITLDGDQAGLPINDLIDNVEAALGTAVQTAVKRADEQAFALANGQNLMFCEDAARRLNLALKRSDAVKAFHLKVIHAESLHAHDAVAESRWTRNPA</sequence>
<organism>
    <name type="scientific">Pseudomonas fluorescens (strain SBW25)</name>
    <dbReference type="NCBI Taxonomy" id="216595"/>
    <lineage>
        <taxon>Bacteria</taxon>
        <taxon>Pseudomonadati</taxon>
        <taxon>Pseudomonadota</taxon>
        <taxon>Gammaproteobacteria</taxon>
        <taxon>Pseudomonadales</taxon>
        <taxon>Pseudomonadaceae</taxon>
        <taxon>Pseudomonas</taxon>
    </lineage>
</organism>
<keyword id="KW-0378">Hydrolase</keyword>
<accession>C3K4H5</accession>
<proteinExistence type="inferred from homology"/>
<protein>
    <recommendedName>
        <fullName evidence="1">GTP cyclohydrolase FolE2</fullName>
        <ecNumber evidence="1">3.5.4.16</ecNumber>
    </recommendedName>
</protein>
<evidence type="ECO:0000255" key="1">
    <source>
        <dbReference type="HAMAP-Rule" id="MF_01527"/>
    </source>
</evidence>
<dbReference type="EC" id="3.5.4.16" evidence="1"/>
<dbReference type="EMBL" id="AM181176">
    <property type="protein sequence ID" value="CAY53675.1"/>
    <property type="molecule type" value="Genomic_DNA"/>
</dbReference>
<dbReference type="RefSeq" id="WP_015886615.1">
    <property type="nucleotide sequence ID" value="NC_012660.1"/>
</dbReference>
<dbReference type="SMR" id="C3K4H5"/>
<dbReference type="PATRIC" id="fig|216595.4.peg.6212"/>
<dbReference type="eggNOG" id="COG1469">
    <property type="taxonomic scope" value="Bacteria"/>
</dbReference>
<dbReference type="HOGENOM" id="CLU_062816_0_0_6"/>
<dbReference type="OrthoDB" id="239637at2"/>
<dbReference type="UniPathway" id="UPA00848">
    <property type="reaction ID" value="UER00151"/>
</dbReference>
<dbReference type="GO" id="GO:0003934">
    <property type="term" value="F:GTP cyclohydrolase I activity"/>
    <property type="evidence" value="ECO:0007669"/>
    <property type="project" value="UniProtKB-UniRule"/>
</dbReference>
<dbReference type="GO" id="GO:0046654">
    <property type="term" value="P:tetrahydrofolate biosynthetic process"/>
    <property type="evidence" value="ECO:0007669"/>
    <property type="project" value="UniProtKB-UniRule"/>
</dbReference>
<dbReference type="Gene3D" id="3.10.270.10">
    <property type="entry name" value="Urate Oxidase"/>
    <property type="match status" value="1"/>
</dbReference>
<dbReference type="HAMAP" id="MF_01527_B">
    <property type="entry name" value="GTP_cyclohydrol_B"/>
    <property type="match status" value="1"/>
</dbReference>
<dbReference type="InterPro" id="IPR022838">
    <property type="entry name" value="GTP_cyclohydrolase_FolE2"/>
</dbReference>
<dbReference type="InterPro" id="IPR003801">
    <property type="entry name" value="GTP_cyclohydrolase_FolE2/MptA"/>
</dbReference>
<dbReference type="NCBIfam" id="NF010200">
    <property type="entry name" value="PRK13674.1-1"/>
    <property type="match status" value="1"/>
</dbReference>
<dbReference type="PANTHER" id="PTHR36445">
    <property type="entry name" value="GTP CYCLOHYDROLASE MPTA"/>
    <property type="match status" value="1"/>
</dbReference>
<dbReference type="PANTHER" id="PTHR36445:SF1">
    <property type="entry name" value="GTP CYCLOHYDROLASE MPTA"/>
    <property type="match status" value="1"/>
</dbReference>
<dbReference type="Pfam" id="PF02649">
    <property type="entry name" value="GCHY-1"/>
    <property type="match status" value="1"/>
</dbReference>
<feature type="chain" id="PRO_1000215393" description="GTP cyclohydrolase FolE2">
    <location>
        <begin position="1"/>
        <end position="298"/>
    </location>
</feature>
<feature type="site" description="May be catalytically important" evidence="1">
    <location>
        <position position="149"/>
    </location>
</feature>
<gene>
    <name evidence="1" type="primary">folE2</name>
    <name type="ordered locus">PFLU_6088</name>
</gene>
<comment type="function">
    <text evidence="1">Converts GTP to 7,8-dihydroneopterin triphosphate.</text>
</comment>
<comment type="catalytic activity">
    <reaction evidence="1">
        <text>GTP + H2O = 7,8-dihydroneopterin 3'-triphosphate + formate + H(+)</text>
        <dbReference type="Rhea" id="RHEA:17473"/>
        <dbReference type="ChEBI" id="CHEBI:15377"/>
        <dbReference type="ChEBI" id="CHEBI:15378"/>
        <dbReference type="ChEBI" id="CHEBI:15740"/>
        <dbReference type="ChEBI" id="CHEBI:37565"/>
        <dbReference type="ChEBI" id="CHEBI:58462"/>
        <dbReference type="EC" id="3.5.4.16"/>
    </reaction>
</comment>
<comment type="pathway">
    <text evidence="1">Cofactor biosynthesis; 7,8-dihydroneopterin triphosphate biosynthesis; 7,8-dihydroneopterin triphosphate from GTP: step 1/1.</text>
</comment>
<comment type="similarity">
    <text evidence="1">Belongs to the GTP cyclohydrolase IV family.</text>
</comment>
<name>GCH4_PSEFS</name>